<reference key="1">
    <citation type="submission" date="2007-05" db="EMBL/GenBank/DDBJ databases">
        <title>Complete sequence of Pseudomonas putida F1.</title>
        <authorList>
            <consortium name="US DOE Joint Genome Institute"/>
            <person name="Copeland A."/>
            <person name="Lucas S."/>
            <person name="Lapidus A."/>
            <person name="Barry K."/>
            <person name="Detter J.C."/>
            <person name="Glavina del Rio T."/>
            <person name="Hammon N."/>
            <person name="Israni S."/>
            <person name="Dalin E."/>
            <person name="Tice H."/>
            <person name="Pitluck S."/>
            <person name="Chain P."/>
            <person name="Malfatti S."/>
            <person name="Shin M."/>
            <person name="Vergez L."/>
            <person name="Schmutz J."/>
            <person name="Larimer F."/>
            <person name="Land M."/>
            <person name="Hauser L."/>
            <person name="Kyrpides N."/>
            <person name="Lykidis A."/>
            <person name="Parales R."/>
            <person name="Richardson P."/>
        </authorList>
    </citation>
    <scope>NUCLEOTIDE SEQUENCE [LARGE SCALE GENOMIC DNA]</scope>
    <source>
        <strain>ATCC 700007 / DSM 6899 / JCM 31910 / BCRC 17059 / LMG 24140 / F1</strain>
    </source>
</reference>
<protein>
    <recommendedName>
        <fullName evidence="1">Phosphoenolpyruvate carboxykinase (ATP)</fullName>
        <shortName evidence="1">PCK</shortName>
        <shortName evidence="1">PEP carboxykinase</shortName>
        <shortName evidence="1">PEPCK</shortName>
        <ecNumber evidence="1">4.1.1.49</ecNumber>
    </recommendedName>
</protein>
<keyword id="KW-0067">ATP-binding</keyword>
<keyword id="KW-0963">Cytoplasm</keyword>
<keyword id="KW-0210">Decarboxylase</keyword>
<keyword id="KW-0312">Gluconeogenesis</keyword>
<keyword id="KW-0456">Lyase</keyword>
<keyword id="KW-0464">Manganese</keyword>
<keyword id="KW-0479">Metal-binding</keyword>
<keyword id="KW-0547">Nucleotide-binding</keyword>
<proteinExistence type="inferred from homology"/>
<name>PCKA_PSEP1</name>
<evidence type="ECO:0000255" key="1">
    <source>
        <dbReference type="HAMAP-Rule" id="MF_00453"/>
    </source>
</evidence>
<comment type="function">
    <text evidence="1">Involved in the gluconeogenesis. Catalyzes the conversion of oxaloacetate (OAA) to phosphoenolpyruvate (PEP) through direct phosphoryl transfer between the nucleoside triphosphate and OAA.</text>
</comment>
<comment type="catalytic activity">
    <reaction evidence="1">
        <text>oxaloacetate + ATP = phosphoenolpyruvate + ADP + CO2</text>
        <dbReference type="Rhea" id="RHEA:18617"/>
        <dbReference type="ChEBI" id="CHEBI:16452"/>
        <dbReference type="ChEBI" id="CHEBI:16526"/>
        <dbReference type="ChEBI" id="CHEBI:30616"/>
        <dbReference type="ChEBI" id="CHEBI:58702"/>
        <dbReference type="ChEBI" id="CHEBI:456216"/>
        <dbReference type="EC" id="4.1.1.49"/>
    </reaction>
</comment>
<comment type="cofactor">
    <cofactor evidence="1">
        <name>Mn(2+)</name>
        <dbReference type="ChEBI" id="CHEBI:29035"/>
    </cofactor>
    <text evidence="1">Binds 1 Mn(2+) ion per subunit.</text>
</comment>
<comment type="pathway">
    <text evidence="1">Carbohydrate biosynthesis; gluconeogenesis.</text>
</comment>
<comment type="subunit">
    <text evidence="1">Monomer.</text>
</comment>
<comment type="subcellular location">
    <subcellularLocation>
        <location evidence="1">Cytoplasm</location>
    </subcellularLocation>
</comment>
<comment type="similarity">
    <text evidence="1">Belongs to the phosphoenolpyruvate carboxykinase (ATP) family.</text>
</comment>
<feature type="chain" id="PRO_1000026341" description="Phosphoenolpyruvate carboxykinase (ATP)">
    <location>
        <begin position="1"/>
        <end position="513"/>
    </location>
</feature>
<feature type="binding site" evidence="1">
    <location>
        <position position="45"/>
    </location>
    <ligand>
        <name>substrate</name>
    </ligand>
</feature>
<feature type="binding site" evidence="1">
    <location>
        <position position="179"/>
    </location>
    <ligand>
        <name>substrate</name>
    </ligand>
</feature>
<feature type="binding site" evidence="1">
    <location>
        <position position="185"/>
    </location>
    <ligand>
        <name>ATP</name>
        <dbReference type="ChEBI" id="CHEBI:30616"/>
    </ligand>
</feature>
<feature type="binding site" evidence="1">
    <location>
        <position position="185"/>
    </location>
    <ligand>
        <name>Mn(2+)</name>
        <dbReference type="ChEBI" id="CHEBI:29035"/>
    </ligand>
</feature>
<feature type="binding site" evidence="1">
    <location>
        <position position="185"/>
    </location>
    <ligand>
        <name>substrate</name>
    </ligand>
</feature>
<feature type="binding site" evidence="1">
    <location>
        <position position="204"/>
    </location>
    <ligand>
        <name>ATP</name>
        <dbReference type="ChEBI" id="CHEBI:30616"/>
    </ligand>
</feature>
<feature type="binding site" evidence="1">
    <location>
        <position position="204"/>
    </location>
    <ligand>
        <name>Mn(2+)</name>
        <dbReference type="ChEBI" id="CHEBI:29035"/>
    </ligand>
</feature>
<feature type="binding site" evidence="1">
    <location>
        <begin position="220"/>
        <end position="228"/>
    </location>
    <ligand>
        <name>ATP</name>
        <dbReference type="ChEBI" id="CHEBI:30616"/>
    </ligand>
</feature>
<feature type="binding site" evidence="1">
    <location>
        <position position="241"/>
    </location>
    <ligand>
        <name>Mn(2+)</name>
        <dbReference type="ChEBI" id="CHEBI:29035"/>
    </ligand>
</feature>
<feature type="binding site" evidence="1">
    <location>
        <position position="269"/>
    </location>
    <ligand>
        <name>ATP</name>
        <dbReference type="ChEBI" id="CHEBI:30616"/>
    </ligand>
</feature>
<feature type="binding site" evidence="1">
    <location>
        <position position="305"/>
    </location>
    <ligand>
        <name>ATP</name>
        <dbReference type="ChEBI" id="CHEBI:30616"/>
    </ligand>
</feature>
<feature type="binding site" evidence="1">
    <location>
        <position position="305"/>
    </location>
    <ligand>
        <name>substrate</name>
    </ligand>
</feature>
<feature type="binding site" evidence="1">
    <location>
        <position position="431"/>
    </location>
    <ligand>
        <name>ATP</name>
        <dbReference type="ChEBI" id="CHEBI:30616"/>
    </ligand>
</feature>
<gene>
    <name evidence="1" type="primary">pckA</name>
    <name type="ordered locus">Pput_0268</name>
</gene>
<organism>
    <name type="scientific">Pseudomonas putida (strain ATCC 700007 / DSM 6899 / JCM 31910 / BCRC 17059 / LMG 24140 / F1)</name>
    <dbReference type="NCBI Taxonomy" id="351746"/>
    <lineage>
        <taxon>Bacteria</taxon>
        <taxon>Pseudomonadati</taxon>
        <taxon>Pseudomonadota</taxon>
        <taxon>Gammaproteobacteria</taxon>
        <taxon>Pseudomonadales</taxon>
        <taxon>Pseudomonadaceae</taxon>
        <taxon>Pseudomonas</taxon>
    </lineage>
</organism>
<dbReference type="EC" id="4.1.1.49" evidence="1"/>
<dbReference type="EMBL" id="CP000712">
    <property type="protein sequence ID" value="ABQ76442.1"/>
    <property type="molecule type" value="Genomic_DNA"/>
</dbReference>
<dbReference type="SMR" id="A5VX32"/>
<dbReference type="KEGG" id="ppf:Pput_0268"/>
<dbReference type="eggNOG" id="COG1866">
    <property type="taxonomic scope" value="Bacteria"/>
</dbReference>
<dbReference type="HOGENOM" id="CLU_018247_0_1_6"/>
<dbReference type="UniPathway" id="UPA00138"/>
<dbReference type="GO" id="GO:0005829">
    <property type="term" value="C:cytosol"/>
    <property type="evidence" value="ECO:0007669"/>
    <property type="project" value="TreeGrafter"/>
</dbReference>
<dbReference type="GO" id="GO:0005524">
    <property type="term" value="F:ATP binding"/>
    <property type="evidence" value="ECO:0007669"/>
    <property type="project" value="UniProtKB-UniRule"/>
</dbReference>
<dbReference type="GO" id="GO:0046872">
    <property type="term" value="F:metal ion binding"/>
    <property type="evidence" value="ECO:0007669"/>
    <property type="project" value="UniProtKB-KW"/>
</dbReference>
<dbReference type="GO" id="GO:0004612">
    <property type="term" value="F:phosphoenolpyruvate carboxykinase (ATP) activity"/>
    <property type="evidence" value="ECO:0007669"/>
    <property type="project" value="UniProtKB-UniRule"/>
</dbReference>
<dbReference type="GO" id="GO:0006094">
    <property type="term" value="P:gluconeogenesis"/>
    <property type="evidence" value="ECO:0007669"/>
    <property type="project" value="UniProtKB-UniRule"/>
</dbReference>
<dbReference type="Gene3D" id="3.90.228.20">
    <property type="match status" value="1"/>
</dbReference>
<dbReference type="Gene3D" id="3.40.449.10">
    <property type="entry name" value="Phosphoenolpyruvate Carboxykinase, domain 1"/>
    <property type="match status" value="1"/>
</dbReference>
<dbReference type="Gene3D" id="2.170.8.10">
    <property type="entry name" value="Phosphoenolpyruvate Carboxykinase, domain 2"/>
    <property type="match status" value="1"/>
</dbReference>
<dbReference type="HAMAP" id="MF_00453">
    <property type="entry name" value="PEPCK_ATP"/>
    <property type="match status" value="1"/>
</dbReference>
<dbReference type="InterPro" id="IPR001272">
    <property type="entry name" value="PEP_carboxykinase_ATP"/>
</dbReference>
<dbReference type="InterPro" id="IPR013035">
    <property type="entry name" value="PEP_carboxykinase_C"/>
</dbReference>
<dbReference type="InterPro" id="IPR008210">
    <property type="entry name" value="PEP_carboxykinase_N"/>
</dbReference>
<dbReference type="InterPro" id="IPR015994">
    <property type="entry name" value="PEPCK_ATP_CS"/>
</dbReference>
<dbReference type="NCBIfam" id="TIGR00224">
    <property type="entry name" value="pckA"/>
    <property type="match status" value="1"/>
</dbReference>
<dbReference type="NCBIfam" id="NF006820">
    <property type="entry name" value="PRK09344.1-2"/>
    <property type="match status" value="1"/>
</dbReference>
<dbReference type="NCBIfam" id="NF006821">
    <property type="entry name" value="PRK09344.1-3"/>
    <property type="match status" value="1"/>
</dbReference>
<dbReference type="NCBIfam" id="NF006823">
    <property type="entry name" value="PRK09344.1-5"/>
    <property type="match status" value="1"/>
</dbReference>
<dbReference type="PANTHER" id="PTHR30031:SF0">
    <property type="entry name" value="PHOSPHOENOLPYRUVATE CARBOXYKINASE (ATP)"/>
    <property type="match status" value="1"/>
</dbReference>
<dbReference type="PANTHER" id="PTHR30031">
    <property type="entry name" value="PHOSPHOENOLPYRUVATE CARBOXYKINASE ATP"/>
    <property type="match status" value="1"/>
</dbReference>
<dbReference type="Pfam" id="PF01293">
    <property type="entry name" value="PEPCK_ATP"/>
    <property type="match status" value="1"/>
</dbReference>
<dbReference type="PIRSF" id="PIRSF006294">
    <property type="entry name" value="PEP_crbxkin"/>
    <property type="match status" value="1"/>
</dbReference>
<dbReference type="SUPFAM" id="SSF68923">
    <property type="entry name" value="PEP carboxykinase N-terminal domain"/>
    <property type="match status" value="1"/>
</dbReference>
<dbReference type="SUPFAM" id="SSF53795">
    <property type="entry name" value="PEP carboxykinase-like"/>
    <property type="match status" value="1"/>
</dbReference>
<dbReference type="PROSITE" id="PS00532">
    <property type="entry name" value="PEPCK_ATP"/>
    <property type="match status" value="1"/>
</dbReference>
<sequence>MTQANNTVYTDLSVDELVKEALQRGEGVLADTGALVVETGHRTGRSPADRFIVEEPSTQDAISWGPINRKFPADKFDALWARVEAFNNAQDHFVSYVHVGAAAEHYLPVKMTTQTAWQNLFGRCLFINPEQFNPAGRDQWQILNVANFVCEPERDGTNSDGCVIINFAQKKVLIAGMRYAGEMKKAMFSVQNFLLPAADVLPMHCAANIGEEGDVTLFFGLSGTGKTTLSADESRYLIGDDEHGWGEGVVFNMEGGCYAKCIDLSEKNEPVIWKAIKHGAVLENVVLDANKHADYTDVSLTQNSRAAYPLEHVAKRSEANLGGEPNAVIFLTCDLTGVLPPVSILNNEQAAYHFLSGYTALVGSTEMGSGGGIKSTFSTCFGAPFFPRPAGEYAELLIKRINGFNSKVYLVNTGWTGGGYGVGKRFSIPTTRAVIAAIQSGALVGAETEHLDIINLDVPKAVPGVETELLNPRTNWADKAAYDEAAKGLAKLFIENFKKFEVSDAIKAAGPQL</sequence>
<accession>A5VX32</accession>